<comment type="function">
    <text evidence="1">Transforms N(2)-succinylglutamate into succinate and glutamate.</text>
</comment>
<comment type="catalytic activity">
    <reaction evidence="1">
        <text>N-succinyl-L-glutamate + H2O = L-glutamate + succinate</text>
        <dbReference type="Rhea" id="RHEA:15169"/>
        <dbReference type="ChEBI" id="CHEBI:15377"/>
        <dbReference type="ChEBI" id="CHEBI:29985"/>
        <dbReference type="ChEBI" id="CHEBI:30031"/>
        <dbReference type="ChEBI" id="CHEBI:58763"/>
        <dbReference type="EC" id="3.5.1.96"/>
    </reaction>
</comment>
<comment type="cofactor">
    <cofactor evidence="1">
        <name>Zn(2+)</name>
        <dbReference type="ChEBI" id="CHEBI:29105"/>
    </cofactor>
    <text evidence="1">Binds 1 zinc ion per subunit.</text>
</comment>
<comment type="pathway">
    <text evidence="1">Amino-acid degradation; L-arginine degradation via AST pathway; L-glutamate and succinate from L-arginine: step 5/5.</text>
</comment>
<comment type="similarity">
    <text evidence="1">Belongs to the AspA/AstE family. Succinylglutamate desuccinylase subfamily.</text>
</comment>
<feature type="chain" id="PRO_1000133648" description="Succinylglutamate desuccinylase">
    <location>
        <begin position="1"/>
        <end position="322"/>
    </location>
</feature>
<feature type="active site" evidence="1">
    <location>
        <position position="210"/>
    </location>
</feature>
<feature type="binding site" evidence="1">
    <location>
        <position position="53"/>
    </location>
    <ligand>
        <name>Zn(2+)</name>
        <dbReference type="ChEBI" id="CHEBI:29105"/>
    </ligand>
</feature>
<feature type="binding site" evidence="1">
    <location>
        <position position="56"/>
    </location>
    <ligand>
        <name>Zn(2+)</name>
        <dbReference type="ChEBI" id="CHEBI:29105"/>
    </ligand>
</feature>
<feature type="binding site" evidence="1">
    <location>
        <position position="147"/>
    </location>
    <ligand>
        <name>Zn(2+)</name>
        <dbReference type="ChEBI" id="CHEBI:29105"/>
    </ligand>
</feature>
<organism>
    <name type="scientific">Shigella boydii serotype 18 (strain CDC 3083-94 / BS512)</name>
    <dbReference type="NCBI Taxonomy" id="344609"/>
    <lineage>
        <taxon>Bacteria</taxon>
        <taxon>Pseudomonadati</taxon>
        <taxon>Pseudomonadota</taxon>
        <taxon>Gammaproteobacteria</taxon>
        <taxon>Enterobacterales</taxon>
        <taxon>Enterobacteriaceae</taxon>
        <taxon>Shigella</taxon>
    </lineage>
</organism>
<dbReference type="EC" id="3.5.1.96" evidence="1"/>
<dbReference type="EMBL" id="CP001063">
    <property type="protein sequence ID" value="ACD09119.1"/>
    <property type="molecule type" value="Genomic_DNA"/>
</dbReference>
<dbReference type="RefSeq" id="WP_000368506.1">
    <property type="nucleotide sequence ID" value="NC_010658.1"/>
</dbReference>
<dbReference type="SMR" id="B2U3C5"/>
<dbReference type="STRING" id="344609.SbBS512_E1990"/>
<dbReference type="KEGG" id="sbc:SbBS512_E1990"/>
<dbReference type="HOGENOM" id="CLU_071608_0_0_6"/>
<dbReference type="UniPathway" id="UPA00185">
    <property type="reaction ID" value="UER00283"/>
</dbReference>
<dbReference type="Proteomes" id="UP000001030">
    <property type="component" value="Chromosome"/>
</dbReference>
<dbReference type="GO" id="GO:0016788">
    <property type="term" value="F:hydrolase activity, acting on ester bonds"/>
    <property type="evidence" value="ECO:0007669"/>
    <property type="project" value="UniProtKB-UniRule"/>
</dbReference>
<dbReference type="GO" id="GO:0009017">
    <property type="term" value="F:succinylglutamate desuccinylase activity"/>
    <property type="evidence" value="ECO:0007669"/>
    <property type="project" value="UniProtKB-EC"/>
</dbReference>
<dbReference type="GO" id="GO:0008270">
    <property type="term" value="F:zinc ion binding"/>
    <property type="evidence" value="ECO:0007669"/>
    <property type="project" value="UniProtKB-UniRule"/>
</dbReference>
<dbReference type="GO" id="GO:0019544">
    <property type="term" value="P:arginine catabolic process to glutamate"/>
    <property type="evidence" value="ECO:0007669"/>
    <property type="project" value="UniProtKB-UniRule"/>
</dbReference>
<dbReference type="GO" id="GO:0019545">
    <property type="term" value="P:arginine catabolic process to succinate"/>
    <property type="evidence" value="ECO:0007669"/>
    <property type="project" value="UniProtKB-UniRule"/>
</dbReference>
<dbReference type="CDD" id="cd03855">
    <property type="entry name" value="M14_ASTE"/>
    <property type="match status" value="1"/>
</dbReference>
<dbReference type="FunFam" id="3.40.630.10:FF:000017">
    <property type="entry name" value="Succinylglutamate desuccinylase"/>
    <property type="match status" value="1"/>
</dbReference>
<dbReference type="Gene3D" id="3.40.630.10">
    <property type="entry name" value="Zn peptidases"/>
    <property type="match status" value="1"/>
</dbReference>
<dbReference type="HAMAP" id="MF_00767">
    <property type="entry name" value="Arg_catab_AstE"/>
    <property type="match status" value="1"/>
</dbReference>
<dbReference type="InterPro" id="IPR050178">
    <property type="entry name" value="AspA/AstE_fam"/>
</dbReference>
<dbReference type="InterPro" id="IPR055438">
    <property type="entry name" value="AstE_AspA_cat"/>
</dbReference>
<dbReference type="InterPro" id="IPR007036">
    <property type="entry name" value="Aste_AspA_hybrid_dom"/>
</dbReference>
<dbReference type="InterPro" id="IPR016681">
    <property type="entry name" value="SuccinylGlu_desuccinylase"/>
</dbReference>
<dbReference type="NCBIfam" id="TIGR03242">
    <property type="entry name" value="arg_catab_astE"/>
    <property type="match status" value="1"/>
</dbReference>
<dbReference type="NCBIfam" id="NF003706">
    <property type="entry name" value="PRK05324.1"/>
    <property type="match status" value="1"/>
</dbReference>
<dbReference type="PANTHER" id="PTHR15162">
    <property type="entry name" value="ASPARTOACYLASE"/>
    <property type="match status" value="1"/>
</dbReference>
<dbReference type="PANTHER" id="PTHR15162:SF7">
    <property type="entry name" value="SUCCINYLGLUTAMATE DESUCCINYLASE"/>
    <property type="match status" value="1"/>
</dbReference>
<dbReference type="Pfam" id="PF24827">
    <property type="entry name" value="AstE_AspA_cat"/>
    <property type="match status" value="1"/>
</dbReference>
<dbReference type="Pfam" id="PF04952">
    <property type="entry name" value="AstE_AspA_hybrid"/>
    <property type="match status" value="1"/>
</dbReference>
<dbReference type="PIRSF" id="PIRSF017020">
    <property type="entry name" value="AstE"/>
    <property type="match status" value="1"/>
</dbReference>
<dbReference type="SUPFAM" id="SSF53187">
    <property type="entry name" value="Zn-dependent exopeptidases"/>
    <property type="match status" value="1"/>
</dbReference>
<evidence type="ECO:0000255" key="1">
    <source>
        <dbReference type="HAMAP-Rule" id="MF_00767"/>
    </source>
</evidence>
<name>ASTE_SHIB3</name>
<reference key="1">
    <citation type="submission" date="2008-05" db="EMBL/GenBank/DDBJ databases">
        <title>Complete sequence of Shigella boydii serotype 18 strain BS512.</title>
        <authorList>
            <person name="Rasko D.A."/>
            <person name="Rosovitz M."/>
            <person name="Maurelli A.T."/>
            <person name="Myers G."/>
            <person name="Seshadri R."/>
            <person name="Cer R."/>
            <person name="Jiang L."/>
            <person name="Ravel J."/>
            <person name="Sebastian Y."/>
        </authorList>
    </citation>
    <scope>NUCLEOTIDE SEQUENCE [LARGE SCALE GENOMIC DNA]</scope>
    <source>
        <strain>CDC 3083-94 / BS512</strain>
    </source>
</reference>
<keyword id="KW-0056">Arginine metabolism</keyword>
<keyword id="KW-0378">Hydrolase</keyword>
<keyword id="KW-0479">Metal-binding</keyword>
<keyword id="KW-1185">Reference proteome</keyword>
<keyword id="KW-0862">Zinc</keyword>
<accession>B2U3C5</accession>
<proteinExistence type="inferred from homology"/>
<gene>
    <name evidence="1" type="primary">astE</name>
    <name type="ordered locus">SbBS512_E1990</name>
</gene>
<sequence>MDNFLALTLTGKKPVITEREINGVRWRWLGDGVLELTPLTPPQGALVISAGIHGNETAPVEMLDALLGAISHGEIPLRWRLLVILGNPPALKQGKRYCHSDMNRMFGGRWQLFAESGETCRARELEQCLEDFYDQGKESVRWHLDLHTAIRGSLHPQFGVLPQRDIPWDEKFLTWLGAAGLEALVFHQEPGGTFTHFSARHFGALACTLELGKALPFGQNDLRQFAVTASAIAALLSGESVGIVRTPPLRYRVVSQITRHSPSFEMHMASDTLNFMPFEKGTLLAQDGEERFTVTHDVEYVLFPNPLVALGLRAGLMLEKIS</sequence>
<protein>
    <recommendedName>
        <fullName evidence="1">Succinylglutamate desuccinylase</fullName>
        <ecNumber evidence="1">3.5.1.96</ecNumber>
    </recommendedName>
</protein>